<protein>
    <recommendedName>
        <fullName evidence="1">Large ribosomal subunit protein uL5</fullName>
    </recommendedName>
    <alternativeName>
        <fullName evidence="2">50S ribosomal protein L5</fullName>
    </alternativeName>
</protein>
<reference key="1">
    <citation type="submission" date="2007-09" db="EMBL/GenBank/DDBJ databases">
        <title>Complete genome sequence of Rickettsia rickettsii.</title>
        <authorList>
            <person name="Madan A."/>
            <person name="Fahey J."/>
            <person name="Helton E."/>
            <person name="Ketteman M."/>
            <person name="Madan A."/>
            <person name="Rodrigues S."/>
            <person name="Sanchez A."/>
            <person name="Dasch G."/>
            <person name="Eremeeva M."/>
        </authorList>
    </citation>
    <scope>NUCLEOTIDE SEQUENCE [LARGE SCALE GENOMIC DNA]</scope>
    <source>
        <strain>Sheila Smith</strain>
    </source>
</reference>
<organism>
    <name type="scientific">Rickettsia rickettsii (strain Sheila Smith)</name>
    <dbReference type="NCBI Taxonomy" id="392021"/>
    <lineage>
        <taxon>Bacteria</taxon>
        <taxon>Pseudomonadati</taxon>
        <taxon>Pseudomonadota</taxon>
        <taxon>Alphaproteobacteria</taxon>
        <taxon>Rickettsiales</taxon>
        <taxon>Rickettsiaceae</taxon>
        <taxon>Rickettsieae</taxon>
        <taxon>Rickettsia</taxon>
        <taxon>spotted fever group</taxon>
    </lineage>
</organism>
<keyword id="KW-0687">Ribonucleoprotein</keyword>
<keyword id="KW-0689">Ribosomal protein</keyword>
<keyword id="KW-0694">RNA-binding</keyword>
<keyword id="KW-0699">rRNA-binding</keyword>
<keyword id="KW-0820">tRNA-binding</keyword>
<comment type="function">
    <text evidence="1">This is one of the proteins that bind and probably mediate the attachment of the 5S RNA into the large ribosomal subunit, where it forms part of the central protuberance. In the 70S ribosome it contacts protein S13 of the 30S subunit (bridge B1b), connecting the 2 subunits; this bridge is implicated in subunit movement. Contacts the P site tRNA; the 5S rRNA and some of its associated proteins might help stabilize positioning of ribosome-bound tRNAs.</text>
</comment>
<comment type="subunit">
    <text evidence="1">Part of the 50S ribosomal subunit; part of the 5S rRNA/L5/L18/L25 subcomplex. Contacts the 5S rRNA and the P site tRNA. Forms a bridge to the 30S subunit in the 70S ribosome.</text>
</comment>
<comment type="similarity">
    <text evidence="1">Belongs to the universal ribosomal protein uL5 family.</text>
</comment>
<sequence length="179" mass="20669">MLRFKELYQQKIIENLQKKFSYKNKHEIPQIKKIVINMGVGEATANSKVINNAVNDLTLISGQKPVVTLARKSIATFKLRENMKIGCKVTLRKDRMYDFLERLVIVALPRVKEFRGFSYKSFDGKGNFTFGLKEQIVFPEINYDKIDTIRGMDITIVTSAKTDQESKFLLSGFNLPFYN</sequence>
<evidence type="ECO:0000255" key="1">
    <source>
        <dbReference type="HAMAP-Rule" id="MF_01333"/>
    </source>
</evidence>
<evidence type="ECO:0000305" key="2"/>
<accession>A8GT57</accession>
<proteinExistence type="inferred from homology"/>
<feature type="chain" id="PRO_1000052815" description="Large ribosomal subunit protein uL5">
    <location>
        <begin position="1"/>
        <end position="179"/>
    </location>
</feature>
<gene>
    <name evidence="1" type="primary">rplE</name>
    <name type="ordered locus">A1G_05495</name>
</gene>
<name>RL5_RICRS</name>
<dbReference type="EMBL" id="CP000848">
    <property type="protein sequence ID" value="ABV76582.1"/>
    <property type="molecule type" value="Genomic_DNA"/>
</dbReference>
<dbReference type="RefSeq" id="WP_012151144.1">
    <property type="nucleotide sequence ID" value="NZ_CP121767.1"/>
</dbReference>
<dbReference type="SMR" id="A8GT57"/>
<dbReference type="GeneID" id="79937658"/>
<dbReference type="KEGG" id="rri:A1G_05495"/>
<dbReference type="HOGENOM" id="CLU_061015_2_1_5"/>
<dbReference type="Proteomes" id="UP000006832">
    <property type="component" value="Chromosome"/>
</dbReference>
<dbReference type="GO" id="GO:1990904">
    <property type="term" value="C:ribonucleoprotein complex"/>
    <property type="evidence" value="ECO:0007669"/>
    <property type="project" value="UniProtKB-KW"/>
</dbReference>
<dbReference type="GO" id="GO:0005840">
    <property type="term" value="C:ribosome"/>
    <property type="evidence" value="ECO:0007669"/>
    <property type="project" value="UniProtKB-KW"/>
</dbReference>
<dbReference type="GO" id="GO:0019843">
    <property type="term" value="F:rRNA binding"/>
    <property type="evidence" value="ECO:0007669"/>
    <property type="project" value="UniProtKB-UniRule"/>
</dbReference>
<dbReference type="GO" id="GO:0003735">
    <property type="term" value="F:structural constituent of ribosome"/>
    <property type="evidence" value="ECO:0007669"/>
    <property type="project" value="InterPro"/>
</dbReference>
<dbReference type="GO" id="GO:0000049">
    <property type="term" value="F:tRNA binding"/>
    <property type="evidence" value="ECO:0007669"/>
    <property type="project" value="UniProtKB-UniRule"/>
</dbReference>
<dbReference type="GO" id="GO:0006412">
    <property type="term" value="P:translation"/>
    <property type="evidence" value="ECO:0007669"/>
    <property type="project" value="UniProtKB-UniRule"/>
</dbReference>
<dbReference type="FunFam" id="3.30.1440.10:FF:000001">
    <property type="entry name" value="50S ribosomal protein L5"/>
    <property type="match status" value="1"/>
</dbReference>
<dbReference type="Gene3D" id="3.30.1440.10">
    <property type="match status" value="1"/>
</dbReference>
<dbReference type="HAMAP" id="MF_01333_B">
    <property type="entry name" value="Ribosomal_uL5_B"/>
    <property type="match status" value="1"/>
</dbReference>
<dbReference type="InterPro" id="IPR002132">
    <property type="entry name" value="Ribosomal_uL5"/>
</dbReference>
<dbReference type="InterPro" id="IPR020930">
    <property type="entry name" value="Ribosomal_uL5_bac-type"/>
</dbReference>
<dbReference type="InterPro" id="IPR031309">
    <property type="entry name" value="Ribosomal_uL5_C"/>
</dbReference>
<dbReference type="InterPro" id="IPR020929">
    <property type="entry name" value="Ribosomal_uL5_CS"/>
</dbReference>
<dbReference type="InterPro" id="IPR022803">
    <property type="entry name" value="Ribosomal_uL5_dom_sf"/>
</dbReference>
<dbReference type="InterPro" id="IPR031310">
    <property type="entry name" value="Ribosomal_uL5_N"/>
</dbReference>
<dbReference type="NCBIfam" id="NF000585">
    <property type="entry name" value="PRK00010.1"/>
    <property type="match status" value="1"/>
</dbReference>
<dbReference type="PANTHER" id="PTHR11994">
    <property type="entry name" value="60S RIBOSOMAL PROTEIN L11-RELATED"/>
    <property type="match status" value="1"/>
</dbReference>
<dbReference type="Pfam" id="PF00281">
    <property type="entry name" value="Ribosomal_L5"/>
    <property type="match status" value="1"/>
</dbReference>
<dbReference type="Pfam" id="PF00673">
    <property type="entry name" value="Ribosomal_L5_C"/>
    <property type="match status" value="1"/>
</dbReference>
<dbReference type="PIRSF" id="PIRSF002161">
    <property type="entry name" value="Ribosomal_L5"/>
    <property type="match status" value="1"/>
</dbReference>
<dbReference type="SUPFAM" id="SSF55282">
    <property type="entry name" value="RL5-like"/>
    <property type="match status" value="1"/>
</dbReference>
<dbReference type="PROSITE" id="PS00358">
    <property type="entry name" value="RIBOSOMAL_L5"/>
    <property type="match status" value="1"/>
</dbReference>